<gene>
    <name type="primary">vps45</name>
    <name type="ORF">DDB_G0290213</name>
</gene>
<organism>
    <name type="scientific">Dictyostelium discoideum</name>
    <name type="common">Social amoeba</name>
    <dbReference type="NCBI Taxonomy" id="44689"/>
    <lineage>
        <taxon>Eukaryota</taxon>
        <taxon>Amoebozoa</taxon>
        <taxon>Evosea</taxon>
        <taxon>Eumycetozoa</taxon>
        <taxon>Dictyostelia</taxon>
        <taxon>Dictyosteliales</taxon>
        <taxon>Dictyosteliaceae</taxon>
        <taxon>Dictyostelium</taxon>
    </lineage>
</organism>
<reference key="1">
    <citation type="journal article" date="2005" name="Nature">
        <title>The genome of the social amoeba Dictyostelium discoideum.</title>
        <authorList>
            <person name="Eichinger L."/>
            <person name="Pachebat J.A."/>
            <person name="Gloeckner G."/>
            <person name="Rajandream M.A."/>
            <person name="Sucgang R."/>
            <person name="Berriman M."/>
            <person name="Song J."/>
            <person name="Olsen R."/>
            <person name="Szafranski K."/>
            <person name="Xu Q."/>
            <person name="Tunggal B."/>
            <person name="Kummerfeld S."/>
            <person name="Madera M."/>
            <person name="Konfortov B.A."/>
            <person name="Rivero F."/>
            <person name="Bankier A.T."/>
            <person name="Lehmann R."/>
            <person name="Hamlin N."/>
            <person name="Davies R."/>
            <person name="Gaudet P."/>
            <person name="Fey P."/>
            <person name="Pilcher K."/>
            <person name="Chen G."/>
            <person name="Saunders D."/>
            <person name="Sodergren E.J."/>
            <person name="Davis P."/>
            <person name="Kerhornou A."/>
            <person name="Nie X."/>
            <person name="Hall N."/>
            <person name="Anjard C."/>
            <person name="Hemphill L."/>
            <person name="Bason N."/>
            <person name="Farbrother P."/>
            <person name="Desany B."/>
            <person name="Just E."/>
            <person name="Morio T."/>
            <person name="Rost R."/>
            <person name="Churcher C.M."/>
            <person name="Cooper J."/>
            <person name="Haydock S."/>
            <person name="van Driessche N."/>
            <person name="Cronin A."/>
            <person name="Goodhead I."/>
            <person name="Muzny D.M."/>
            <person name="Mourier T."/>
            <person name="Pain A."/>
            <person name="Lu M."/>
            <person name="Harper D."/>
            <person name="Lindsay R."/>
            <person name="Hauser H."/>
            <person name="James K.D."/>
            <person name="Quiles M."/>
            <person name="Madan Babu M."/>
            <person name="Saito T."/>
            <person name="Buchrieser C."/>
            <person name="Wardroper A."/>
            <person name="Felder M."/>
            <person name="Thangavelu M."/>
            <person name="Johnson D."/>
            <person name="Knights A."/>
            <person name="Loulseged H."/>
            <person name="Mungall K.L."/>
            <person name="Oliver K."/>
            <person name="Price C."/>
            <person name="Quail M.A."/>
            <person name="Urushihara H."/>
            <person name="Hernandez J."/>
            <person name="Rabbinowitsch E."/>
            <person name="Steffen D."/>
            <person name="Sanders M."/>
            <person name="Ma J."/>
            <person name="Kohara Y."/>
            <person name="Sharp S."/>
            <person name="Simmonds M.N."/>
            <person name="Spiegler S."/>
            <person name="Tivey A."/>
            <person name="Sugano S."/>
            <person name="White B."/>
            <person name="Walker D."/>
            <person name="Woodward J.R."/>
            <person name="Winckler T."/>
            <person name="Tanaka Y."/>
            <person name="Shaulsky G."/>
            <person name="Schleicher M."/>
            <person name="Weinstock G.M."/>
            <person name="Rosenthal A."/>
            <person name="Cox E.C."/>
            <person name="Chisholm R.L."/>
            <person name="Gibbs R.A."/>
            <person name="Loomis W.F."/>
            <person name="Platzer M."/>
            <person name="Kay R.R."/>
            <person name="Williams J.G."/>
            <person name="Dear P.H."/>
            <person name="Noegel A.A."/>
            <person name="Barrell B.G."/>
            <person name="Kuspa A."/>
        </authorList>
    </citation>
    <scope>NUCLEOTIDE SEQUENCE [LARGE SCALE GENOMIC DNA]</scope>
    <source>
        <strain>AX4</strain>
    </source>
</reference>
<reference key="2">
    <citation type="journal article" date="2006" name="Mol. Cell. Proteomics">
        <title>Proteomics fingerprinting of phagosome maturation and evidence for the role of a Galpha during uptake.</title>
        <authorList>
            <person name="Gotthardt D."/>
            <person name="Blancheteau V."/>
            <person name="Bosserhoff A."/>
            <person name="Ruppert T."/>
            <person name="Delorenzi M."/>
            <person name="Soldati T."/>
        </authorList>
    </citation>
    <scope>IDENTIFICATION BY MASS SPECTROMETRY [LARGE SCALE ANALYSIS]</scope>
    <source>
        <strain>AX2</strain>
    </source>
</reference>
<accession>Q54GE3</accession>
<feature type="chain" id="PRO_0000328593" description="Vacuolar protein sorting-associated protein 45">
    <location>
        <begin position="1"/>
        <end position="563"/>
    </location>
</feature>
<comment type="function">
    <text evidence="1">May play a role in vesicle-mediated protein trafficking from the Golgi stack through the trans-Golgi network.</text>
</comment>
<comment type="subcellular location">
    <subcellularLocation>
        <location evidence="1">Golgi apparatus membrane</location>
        <topology evidence="1">Peripheral membrane protein</topology>
    </subcellularLocation>
    <subcellularLocation>
        <location evidence="1">Endosome membrane</location>
        <topology evidence="1">Peripheral membrane protein</topology>
    </subcellularLocation>
    <text evidence="1">Associated with Golgi/endosomal vesicles and the trans-Golgi network.</text>
</comment>
<comment type="similarity">
    <text evidence="2">Belongs to the STXBP/unc-18/SEC1 family.</text>
</comment>
<name>VPS45_DICDI</name>
<proteinExistence type="evidence at protein level"/>
<keyword id="KW-0967">Endosome</keyword>
<keyword id="KW-0333">Golgi apparatus</keyword>
<keyword id="KW-0472">Membrane</keyword>
<keyword id="KW-0653">Protein transport</keyword>
<keyword id="KW-1185">Reference proteome</keyword>
<keyword id="KW-0813">Transport</keyword>
<evidence type="ECO:0000250" key="1"/>
<evidence type="ECO:0000305" key="2"/>
<sequence>MSGKQMDVIASIQEYINKILTNIQGMKVLVLDKETAGIVSMVYTQSEILQKEVFLFEKIENTKEKMLHMKGVYFIRPTQENIQSICDELKDPKFNKYHLFFTNTISKVSLDEIAKADEQDVVSEIQEYFGDFFAVNPDTFTLNLPGMLTKKSPRWQGDVGRVVDGLFSSLLALKKKPVIRYSSNSDTTRYLAEKITERMNRDRDLFDFRRQGEPLLLILDRKDDPITPLLHQWTYQAMIHELLTINNNRVSLAKAPGIKDELKEVVLSLDHDIFYKENLYKNFGDLGASIKDLVDQFQDKMNTNQNIQTIDDMKKFIENYPNFQKFSTTVSKHVSLMDELNRLISLDNLMEVSEVQQELACNHDHNSIYNHVLEIVNDSKYTDRDKLVLVLLYSIRYEDGRVWELKEKLSSIGIPPKEIGLIDTLRGYAGASLREGDLLGTKNIFSFARSVVKRGLQGVSNIYTQHKPLLHDILDSILKNKLKETSYPYLSTTQSRERPQDVIIFMVGGITYEEALTVYTFNSLNTGVCRVVLGGTSILNREQFLEDLSSTQISNPSSSSGRR</sequence>
<protein>
    <recommendedName>
        <fullName>Vacuolar protein sorting-associated protein 45</fullName>
    </recommendedName>
</protein>
<dbReference type="EMBL" id="AAFI02000161">
    <property type="protein sequence ID" value="EAL62328.1"/>
    <property type="molecule type" value="Genomic_DNA"/>
</dbReference>
<dbReference type="RefSeq" id="XP_635835.1">
    <property type="nucleotide sequence ID" value="XM_630743.1"/>
</dbReference>
<dbReference type="SMR" id="Q54GE3"/>
<dbReference type="FunCoup" id="Q54GE3">
    <property type="interactions" value="1015"/>
</dbReference>
<dbReference type="STRING" id="44689.Q54GE3"/>
<dbReference type="PaxDb" id="44689-DDB0234175"/>
<dbReference type="EnsemblProtists" id="EAL62328">
    <property type="protein sequence ID" value="EAL62328"/>
    <property type="gene ID" value="DDB_G0290213"/>
</dbReference>
<dbReference type="GeneID" id="8627543"/>
<dbReference type="KEGG" id="ddi:DDB_G0290213"/>
<dbReference type="dictyBase" id="DDB_G0290213">
    <property type="gene designation" value="vps45"/>
</dbReference>
<dbReference type="VEuPathDB" id="AmoebaDB:DDB_G0290213"/>
<dbReference type="eggNOG" id="KOG1299">
    <property type="taxonomic scope" value="Eukaryota"/>
</dbReference>
<dbReference type="HOGENOM" id="CLU_013933_3_1_1"/>
<dbReference type="InParanoid" id="Q54GE3"/>
<dbReference type="OMA" id="VHQLNNA"/>
<dbReference type="PhylomeDB" id="Q54GE3"/>
<dbReference type="Reactome" id="R-DDI-6811438">
    <property type="pathway name" value="Intra-Golgi traffic"/>
</dbReference>
<dbReference type="PRO" id="PR:Q54GE3"/>
<dbReference type="Proteomes" id="UP000002195">
    <property type="component" value="Chromosome 5"/>
</dbReference>
<dbReference type="GO" id="GO:0010008">
    <property type="term" value="C:endosome membrane"/>
    <property type="evidence" value="ECO:0007669"/>
    <property type="project" value="UniProtKB-SubCell"/>
</dbReference>
<dbReference type="GO" id="GO:0000139">
    <property type="term" value="C:Golgi membrane"/>
    <property type="evidence" value="ECO:0000250"/>
    <property type="project" value="dictyBase"/>
</dbReference>
<dbReference type="GO" id="GO:0045335">
    <property type="term" value="C:phagocytic vesicle"/>
    <property type="evidence" value="ECO:0007005"/>
    <property type="project" value="dictyBase"/>
</dbReference>
<dbReference type="GO" id="GO:0051082">
    <property type="term" value="F:unfolded protein binding"/>
    <property type="evidence" value="ECO:0000250"/>
    <property type="project" value="dictyBase"/>
</dbReference>
<dbReference type="GO" id="GO:0006896">
    <property type="term" value="P:Golgi to vacuole transport"/>
    <property type="evidence" value="ECO:0000250"/>
    <property type="project" value="dictyBase"/>
</dbReference>
<dbReference type="GO" id="GO:0006886">
    <property type="term" value="P:intracellular protein transport"/>
    <property type="evidence" value="ECO:0000318"/>
    <property type="project" value="GO_Central"/>
</dbReference>
<dbReference type="GO" id="GO:0016192">
    <property type="term" value="P:vesicle-mediated transport"/>
    <property type="evidence" value="ECO:0000318"/>
    <property type="project" value="GO_Central"/>
</dbReference>
<dbReference type="FunFam" id="3.90.830.10:FF:000002">
    <property type="entry name" value="Vacuolar protein sorting-associated protein 45"/>
    <property type="match status" value="1"/>
</dbReference>
<dbReference type="FunFam" id="3.40.50.2060:FF:000007">
    <property type="entry name" value="Vacuolar sorting protein"/>
    <property type="match status" value="1"/>
</dbReference>
<dbReference type="Gene3D" id="1.25.40.60">
    <property type="match status" value="1"/>
</dbReference>
<dbReference type="Gene3D" id="3.40.50.1910">
    <property type="match status" value="1"/>
</dbReference>
<dbReference type="Gene3D" id="3.40.50.2060">
    <property type="match status" value="1"/>
</dbReference>
<dbReference type="Gene3D" id="3.90.830.10">
    <property type="entry name" value="Syntaxin Binding Protein 1, Chain A, domain 2"/>
    <property type="match status" value="1"/>
</dbReference>
<dbReference type="InterPro" id="IPR043154">
    <property type="entry name" value="Sec-1-like_dom1"/>
</dbReference>
<dbReference type="InterPro" id="IPR043127">
    <property type="entry name" value="Sec-1-like_dom3a"/>
</dbReference>
<dbReference type="InterPro" id="IPR001619">
    <property type="entry name" value="Sec1-like"/>
</dbReference>
<dbReference type="InterPro" id="IPR027482">
    <property type="entry name" value="Sec1-like_dom2"/>
</dbReference>
<dbReference type="InterPro" id="IPR036045">
    <property type="entry name" value="Sec1-like_sf"/>
</dbReference>
<dbReference type="PANTHER" id="PTHR11679">
    <property type="entry name" value="VESICLE PROTEIN SORTING-ASSOCIATED"/>
    <property type="match status" value="1"/>
</dbReference>
<dbReference type="Pfam" id="PF00995">
    <property type="entry name" value="Sec1"/>
    <property type="match status" value="1"/>
</dbReference>
<dbReference type="PIRSF" id="PIRSF005715">
    <property type="entry name" value="VPS45_Sec1"/>
    <property type="match status" value="1"/>
</dbReference>
<dbReference type="SUPFAM" id="SSF56815">
    <property type="entry name" value="Sec1/munc18-like (SM) proteins"/>
    <property type="match status" value="1"/>
</dbReference>